<accession>P84138</accession>
<accession>A0A0K2H5Q6</accession>
<comment type="function">
    <text evidence="1">Purine nucleoside enzyme that catalyzes the phosphorolysis of adenosine and inosine nucleosides, yielding D-ribose 1-phosphate and the respective free bases, adenine and hypoxanthine (PubMed:31978345). Also catalyzes the phosphorolysis of S-methyl-5'-thioadenosine into adenine and S-methyl-5-thio-alpha-D-ribose 1-phosphate (PubMed:31978345). Also has adenosine deaminase activity (PubMed:31978345).</text>
</comment>
<comment type="catalytic activity">
    <reaction evidence="1">
        <text>adenosine + phosphate = alpha-D-ribose 1-phosphate + adenine</text>
        <dbReference type="Rhea" id="RHEA:27642"/>
        <dbReference type="ChEBI" id="CHEBI:16335"/>
        <dbReference type="ChEBI" id="CHEBI:16708"/>
        <dbReference type="ChEBI" id="CHEBI:43474"/>
        <dbReference type="ChEBI" id="CHEBI:57720"/>
        <dbReference type="EC" id="2.4.2.1"/>
    </reaction>
    <physiologicalReaction direction="left-to-right" evidence="1">
        <dbReference type="Rhea" id="RHEA:27643"/>
    </physiologicalReaction>
</comment>
<comment type="catalytic activity">
    <reaction evidence="1">
        <text>S-methyl-5'-thioadenosine + phosphate = 5-(methylsulfanyl)-alpha-D-ribose 1-phosphate + adenine</text>
        <dbReference type="Rhea" id="RHEA:11852"/>
        <dbReference type="ChEBI" id="CHEBI:16708"/>
        <dbReference type="ChEBI" id="CHEBI:17509"/>
        <dbReference type="ChEBI" id="CHEBI:43474"/>
        <dbReference type="ChEBI" id="CHEBI:58533"/>
        <dbReference type="EC" id="2.4.2.28"/>
    </reaction>
    <physiologicalReaction direction="left-to-right" evidence="1">
        <dbReference type="Rhea" id="RHEA:11853"/>
    </physiologicalReaction>
</comment>
<comment type="catalytic activity">
    <reaction evidence="1">
        <text>inosine + phosphate = alpha-D-ribose 1-phosphate + hypoxanthine</text>
        <dbReference type="Rhea" id="RHEA:27646"/>
        <dbReference type="ChEBI" id="CHEBI:17368"/>
        <dbReference type="ChEBI" id="CHEBI:17596"/>
        <dbReference type="ChEBI" id="CHEBI:43474"/>
        <dbReference type="ChEBI" id="CHEBI:57720"/>
        <dbReference type="EC" id="2.4.2.1"/>
    </reaction>
    <physiologicalReaction direction="left-to-right" evidence="1">
        <dbReference type="Rhea" id="RHEA:27647"/>
    </physiologicalReaction>
</comment>
<comment type="catalytic activity">
    <reaction evidence="1">
        <text>adenosine + H2O + H(+) = inosine + NH4(+)</text>
        <dbReference type="Rhea" id="RHEA:24408"/>
        <dbReference type="ChEBI" id="CHEBI:15377"/>
        <dbReference type="ChEBI" id="CHEBI:15378"/>
        <dbReference type="ChEBI" id="CHEBI:16335"/>
        <dbReference type="ChEBI" id="CHEBI:17596"/>
        <dbReference type="ChEBI" id="CHEBI:28938"/>
        <dbReference type="EC" id="3.5.4.4"/>
    </reaction>
    <physiologicalReaction direction="left-to-right" evidence="1">
        <dbReference type="Rhea" id="RHEA:24409"/>
    </physiologicalReaction>
</comment>
<comment type="cofactor">
    <cofactor evidence="1">
        <name>Zn(2+)</name>
        <dbReference type="ChEBI" id="CHEBI:29105"/>
    </cofactor>
    <text evidence="1">Binds 2 zinc ions (PubMed:31978345). One zinc is catalytic and mediates binding to the substrate, while the second is probably structural (PubMed:31978345).</text>
</comment>
<comment type="similarity">
    <text evidence="4">Belongs to the purine nucleoside phosphorylase YfiH/LACC1 family.</text>
</comment>
<proteinExistence type="evidence at protein level"/>
<keyword id="KW-0002">3D-structure</keyword>
<keyword id="KW-0378">Hydrolase</keyword>
<keyword id="KW-0479">Metal-binding</keyword>
<keyword id="KW-0808">Transferase</keyword>
<keyword id="KW-0862">Zinc</keyword>
<name>PURNU_GEOS3</name>
<evidence type="ECO:0000269" key="1">
    <source>
    </source>
</evidence>
<evidence type="ECO:0000269" key="2">
    <source ref="2"/>
</evidence>
<evidence type="ECO:0000303" key="3">
    <source>
    </source>
</evidence>
<evidence type="ECO:0000305" key="4"/>
<evidence type="ECO:0000305" key="5">
    <source>
    </source>
</evidence>
<evidence type="ECO:0007744" key="6">
    <source>
        <dbReference type="PDB" id="1T8H"/>
    </source>
</evidence>
<evidence type="ECO:0007744" key="7">
    <source>
        <dbReference type="PDB" id="6T0Y"/>
    </source>
</evidence>
<evidence type="ECO:0007744" key="8">
    <source>
        <dbReference type="PDB" id="6T1B"/>
    </source>
</evidence>
<evidence type="ECO:0007829" key="9">
    <source>
        <dbReference type="PDB" id="6T0Y"/>
    </source>
</evidence>
<reference key="1">
    <citation type="submission" date="2014-07" db="EMBL/GenBank/DDBJ databases">
        <title>Complete genome Sequence of Geobacillus stearothermophilus strain 10, a Yellowstone hot spring isolate.</title>
        <authorList>
            <person name="Lewis S.A."/>
            <person name="Clifton S.W."/>
            <person name="Najar F.Z."/>
            <person name="Roe B.A."/>
        </authorList>
    </citation>
    <scope>NUCLEOTIDE SEQUENCE [LARGE SCALE GENOMIC DNA]</scope>
    <source>
        <strain>DSM 13240 / CIP 106956 / 10</strain>
    </source>
</reference>
<reference key="2">
    <citation type="submission" date="2004-05" db="PDB data bank">
        <title>1.8 A crystal structure of an uncharacterized B. stearothermophilus protein.</title>
        <authorList>
            <person name="Minasov G."/>
            <person name="Shuvalova L."/>
            <person name="Mondragon A."/>
            <person name="Taneja B."/>
            <person name="Moy S.F."/>
            <person name="Collart F.R."/>
            <person name="Anderson W.F."/>
        </authorList>
    </citation>
    <scope>X-RAY CRYSTALLOGRAPHY (1.80 ANGSTROMS) IN COMPLEX WITH ZINC</scope>
</reference>
<reference key="3">
    <citation type="journal article" date="2020" name="Cell">
        <title>FAMIN is a multifunctional purine enzyme enabling the purine nucleotide cycle.</title>
        <authorList>
            <person name="Cader M.Z."/>
            <person name="de Almeida Rodrigues R.P."/>
            <person name="West J.A."/>
            <person name="Sewell G.W."/>
            <person name="Md-Ibrahim M.N."/>
            <person name="Reikine S."/>
            <person name="Sirago G."/>
            <person name="Unger L.W."/>
            <person name="Inglesias-Romero A.B."/>
            <person name="Ramshorn K."/>
            <person name="Haag L.M."/>
            <person name="Saveljeva S."/>
            <person name="Ebel J.F."/>
            <person name="Rosenstiel P."/>
            <person name="Kaneider N.C."/>
            <person name="Lee J.C."/>
            <person name="Lawley T.D."/>
            <person name="Bradley A."/>
            <person name="Dougan G."/>
            <person name="Modis Y."/>
            <person name="Griffin J.L."/>
            <person name="Kaser A."/>
        </authorList>
    </citation>
    <scope>X-RAY CRYSTALLOGRAPHY (1.20 ANGSTROMS) IN COMPLEX WITH ZINC AND INOSINE</scope>
    <scope>FUNCTION</scope>
    <scope>CATALYTIC ACTIVITY</scope>
    <scope>COFACTOR</scope>
</reference>
<gene>
    <name evidence="3" type="primary">ylmD</name>
</gene>
<protein>
    <recommendedName>
        <fullName evidence="4">Purine nucleoside phosphorylase YlmD</fullName>
        <ecNumber evidence="1">2.4.2.1</ecNumber>
    </recommendedName>
    <alternativeName>
        <fullName evidence="4">Adenosine deaminase YlmD</fullName>
        <ecNumber evidence="1">3.5.4.4</ecNumber>
    </alternativeName>
    <alternativeName>
        <fullName evidence="4">S-methyl-5'-thioadenosine phosphorylase YlmD</fullName>
        <ecNumber evidence="1">2.4.2.28</ecNumber>
    </alternativeName>
</protein>
<dbReference type="EC" id="2.4.2.1" evidence="1"/>
<dbReference type="EC" id="3.5.4.4" evidence="1"/>
<dbReference type="EC" id="2.4.2.28" evidence="1"/>
<dbReference type="EMBL" id="CP008934">
    <property type="protein sequence ID" value="ALA69258.1"/>
    <property type="molecule type" value="Genomic_DNA"/>
</dbReference>
<dbReference type="PDB" id="1T8H">
    <property type="method" value="X-ray"/>
    <property type="resolution" value="1.80 A"/>
    <property type="chains" value="A=1-274"/>
</dbReference>
<dbReference type="PDB" id="6T0Y">
    <property type="method" value="X-ray"/>
    <property type="resolution" value="1.20 A"/>
    <property type="chains" value="A=1-274"/>
</dbReference>
<dbReference type="PDB" id="6T1B">
    <property type="method" value="X-ray"/>
    <property type="resolution" value="1.20 A"/>
    <property type="chains" value="A=1-274"/>
</dbReference>
<dbReference type="PDBsum" id="1T8H"/>
<dbReference type="PDBsum" id="6T0Y"/>
<dbReference type="PDBsum" id="6T1B"/>
<dbReference type="SMR" id="P84138"/>
<dbReference type="KEGG" id="gse:GT50_02955"/>
<dbReference type="PATRIC" id="fig|272567.8.peg.600"/>
<dbReference type="OrthoDB" id="4279at2"/>
<dbReference type="EvolutionaryTrace" id="P84138"/>
<dbReference type="GO" id="GO:0004000">
    <property type="term" value="F:adenosine deaminase activity"/>
    <property type="evidence" value="ECO:0000314"/>
    <property type="project" value="UniProtKB"/>
</dbReference>
<dbReference type="GO" id="GO:0005507">
    <property type="term" value="F:copper ion binding"/>
    <property type="evidence" value="ECO:0007669"/>
    <property type="project" value="TreeGrafter"/>
</dbReference>
<dbReference type="GO" id="GO:0004731">
    <property type="term" value="F:purine-nucleoside phosphorylase activity"/>
    <property type="evidence" value="ECO:0000314"/>
    <property type="project" value="UniProtKB"/>
</dbReference>
<dbReference type="GO" id="GO:0017061">
    <property type="term" value="F:S-methyl-5-thioadenosine phosphorylase activity"/>
    <property type="evidence" value="ECO:0000314"/>
    <property type="project" value="UniProtKB"/>
</dbReference>
<dbReference type="CDD" id="cd16833">
    <property type="entry name" value="YfiH"/>
    <property type="match status" value="1"/>
</dbReference>
<dbReference type="Gene3D" id="3.60.140.10">
    <property type="entry name" value="CNF1/YfiH-like putative cysteine hydrolases"/>
    <property type="match status" value="1"/>
</dbReference>
<dbReference type="InterPro" id="IPR003730">
    <property type="entry name" value="Cu_polyphenol_OxRdtase"/>
</dbReference>
<dbReference type="InterPro" id="IPR038371">
    <property type="entry name" value="Cu_polyphenol_OxRdtase_sf"/>
</dbReference>
<dbReference type="InterPro" id="IPR011324">
    <property type="entry name" value="Cytotoxic_necrot_fac-like_cat"/>
</dbReference>
<dbReference type="NCBIfam" id="TIGR00726">
    <property type="entry name" value="peptidoglycan editing factor PgeF"/>
    <property type="match status" value="1"/>
</dbReference>
<dbReference type="PANTHER" id="PTHR30616:SF2">
    <property type="entry name" value="PURINE NUCLEOSIDE PHOSPHORYLASE LACC1"/>
    <property type="match status" value="1"/>
</dbReference>
<dbReference type="PANTHER" id="PTHR30616">
    <property type="entry name" value="UNCHARACTERIZED PROTEIN YFIH"/>
    <property type="match status" value="1"/>
</dbReference>
<dbReference type="Pfam" id="PF02578">
    <property type="entry name" value="Cu-oxidase_4"/>
    <property type="match status" value="1"/>
</dbReference>
<dbReference type="SUPFAM" id="SSF64438">
    <property type="entry name" value="CNF1/YfiH-like putative cysteine hydrolases"/>
    <property type="match status" value="1"/>
</dbReference>
<feature type="chain" id="PRO_0000449802" description="Purine nucleoside phosphorylase YlmD">
    <location>
        <begin position="1"/>
        <end position="274"/>
    </location>
</feature>
<feature type="binding site" evidence="1 8">
    <location>
        <begin position="46"/>
        <end position="47"/>
    </location>
    <ligand>
        <name>inosine</name>
        <dbReference type="ChEBI" id="CHEBI:17596"/>
    </ligand>
</feature>
<feature type="binding site" evidence="5 8">
    <location>
        <position position="80"/>
    </location>
    <ligand>
        <name>Zn(2+)</name>
        <dbReference type="ChEBI" id="CHEBI:29105"/>
        <label>1</label>
        <note>catalytic</note>
    </ligand>
</feature>
<feature type="binding site" evidence="5 8">
    <location>
        <position position="125"/>
    </location>
    <ligand>
        <name>Zn(2+)</name>
        <dbReference type="ChEBI" id="CHEBI:29105"/>
        <label>1</label>
        <note>catalytic</note>
    </ligand>
</feature>
<feature type="binding site" evidence="5 8">
    <location>
        <position position="142"/>
    </location>
    <ligand>
        <name>Zn(2+)</name>
        <dbReference type="ChEBI" id="CHEBI:29105"/>
        <label>1</label>
        <note>catalytic</note>
    </ligand>
</feature>
<feature type="binding site" evidence="1 2 6 7 8">
    <location>
        <position position="182"/>
    </location>
    <ligand>
        <name>Zn(2+)</name>
        <dbReference type="ChEBI" id="CHEBI:29105"/>
        <label>2</label>
    </ligand>
</feature>
<feature type="binding site" evidence="1 2 6 7 8">
    <location>
        <position position="183"/>
    </location>
    <ligand>
        <name>Zn(2+)</name>
        <dbReference type="ChEBI" id="CHEBI:29105"/>
        <label>2</label>
    </ligand>
</feature>
<feature type="binding site" evidence="1 2 6 7 8">
    <location>
        <position position="242"/>
    </location>
    <ligand>
        <name>Zn(2+)</name>
        <dbReference type="ChEBI" id="CHEBI:29105"/>
        <label>2</label>
    </ligand>
</feature>
<feature type="binding site" evidence="1 2 6 7 8">
    <location>
        <position position="245"/>
    </location>
    <ligand>
        <name>Zn(2+)</name>
        <dbReference type="ChEBI" id="CHEBI:29105"/>
        <label>2</label>
    </ligand>
</feature>
<feature type="binding site" evidence="1 8">
    <location>
        <position position="262"/>
    </location>
    <ligand>
        <name>inosine</name>
        <dbReference type="ChEBI" id="CHEBI:17596"/>
    </ligand>
</feature>
<feature type="strand" evidence="9">
    <location>
        <begin position="4"/>
        <end position="7"/>
    </location>
</feature>
<feature type="strand" evidence="9">
    <location>
        <begin position="9"/>
        <end position="15"/>
    </location>
</feature>
<feature type="helix" evidence="9">
    <location>
        <begin position="18"/>
        <end position="20"/>
    </location>
</feature>
<feature type="strand" evidence="9">
    <location>
        <begin position="23"/>
        <end position="28"/>
    </location>
</feature>
<feature type="strand" evidence="9">
    <location>
        <begin position="32"/>
        <end position="34"/>
    </location>
</feature>
<feature type="helix" evidence="9">
    <location>
        <begin position="37"/>
        <end position="39"/>
    </location>
</feature>
<feature type="strand" evidence="9">
    <location>
        <begin position="46"/>
        <end position="49"/>
    </location>
</feature>
<feature type="helix" evidence="9">
    <location>
        <begin position="52"/>
        <end position="66"/>
    </location>
</feature>
<feature type="helix" evidence="9">
    <location>
        <begin position="70"/>
        <end position="72"/>
    </location>
</feature>
<feature type="strand" evidence="9">
    <location>
        <begin position="84"/>
        <end position="86"/>
    </location>
</feature>
<feature type="helix" evidence="9">
    <location>
        <begin position="89"/>
        <end position="91"/>
    </location>
</feature>
<feature type="turn" evidence="9">
    <location>
        <begin position="92"/>
        <end position="96"/>
    </location>
</feature>
<feature type="helix" evidence="9">
    <location>
        <begin position="99"/>
        <end position="101"/>
    </location>
</feature>
<feature type="strand" evidence="9">
    <location>
        <begin position="107"/>
        <end position="115"/>
    </location>
</feature>
<feature type="strand" evidence="9">
    <location>
        <begin position="117"/>
        <end position="132"/>
    </location>
</feature>
<feature type="turn" evidence="9">
    <location>
        <begin position="133"/>
        <end position="136"/>
    </location>
</feature>
<feature type="strand" evidence="9">
    <location>
        <begin position="137"/>
        <end position="143"/>
    </location>
</feature>
<feature type="helix" evidence="9">
    <location>
        <begin position="145"/>
        <end position="149"/>
    </location>
</feature>
<feature type="helix" evidence="9">
    <location>
        <begin position="152"/>
        <end position="162"/>
    </location>
</feature>
<feature type="helix" evidence="9">
    <location>
        <begin position="168"/>
        <end position="170"/>
    </location>
</feature>
<feature type="strand" evidence="9">
    <location>
        <begin position="172"/>
        <end position="175"/>
    </location>
</feature>
<feature type="turn" evidence="9">
    <location>
        <begin position="181"/>
        <end position="183"/>
    </location>
</feature>
<feature type="helix" evidence="9">
    <location>
        <begin position="188"/>
        <end position="194"/>
    </location>
</feature>
<feature type="helix" evidence="9">
    <location>
        <begin position="195"/>
        <end position="197"/>
    </location>
</feature>
<feature type="strand" evidence="9">
    <location>
        <begin position="205"/>
        <end position="210"/>
    </location>
</feature>
<feature type="strand" evidence="9">
    <location>
        <begin position="213"/>
        <end position="216"/>
    </location>
</feature>
<feature type="helix" evidence="9">
    <location>
        <begin position="218"/>
        <end position="228"/>
    </location>
</feature>
<feature type="helix" evidence="9">
    <location>
        <begin position="233"/>
        <end position="235"/>
    </location>
</feature>
<feature type="strand" evidence="9">
    <location>
        <begin position="236"/>
        <end position="238"/>
    </location>
</feature>
<feature type="turn" evidence="9">
    <location>
        <begin position="243"/>
        <end position="245"/>
    </location>
</feature>
<feature type="turn" evidence="9">
    <location>
        <begin position="247"/>
        <end position="249"/>
    </location>
</feature>
<feature type="turn" evidence="9">
    <location>
        <begin position="253"/>
        <end position="258"/>
    </location>
</feature>
<feature type="strand" evidence="9">
    <location>
        <begin position="263"/>
        <end position="268"/>
    </location>
</feature>
<sequence length="274" mass="29844">MPDIFQQEARGWLRCGAPPFAGAVAGLTTKHGGESKGPFASLNMGLHVGDDRTDVVNNRRRLAEWLAFPLERWVCCEQVHGADIQKVTKSDRGNGAQDFATAVPGVDGLYTDEAGVLLALCFADCVPIYFVAPSAGLVGLAHAGWRGTAGGIAGHMVWLWQTREHIAPSDIYVAIGPAIGPCCYTVDDRVVDSLRPTLPPESPLPWRETSPGQYALDLKEANRLQLLAAGVPNSHIYVSERCTSCEEALFFSHRRDRGTTGRMLAFIGRREEWT</sequence>
<organism>
    <name type="scientific">Geobacillus stearothermophilus (strain DSM 13240 / CIP 106956 / 10)</name>
    <dbReference type="NCBI Taxonomy" id="272567"/>
    <lineage>
        <taxon>Bacteria</taxon>
        <taxon>Bacillati</taxon>
        <taxon>Bacillota</taxon>
        <taxon>Bacilli</taxon>
        <taxon>Bacillales</taxon>
        <taxon>Anoxybacillaceae</taxon>
        <taxon>Geobacillus</taxon>
    </lineage>
</organism>